<feature type="chain" id="PRO_0000150633" description="Olfactory receptor 6N1">
    <location>
        <begin position="1"/>
        <end position="312"/>
    </location>
</feature>
<feature type="topological domain" description="Extracellular" evidence="1">
    <location>
        <begin position="1"/>
        <end position="25"/>
    </location>
</feature>
<feature type="transmembrane region" description="Helical; Name=1" evidence="1">
    <location>
        <begin position="26"/>
        <end position="46"/>
    </location>
</feature>
<feature type="topological domain" description="Cytoplasmic" evidence="1">
    <location>
        <begin position="47"/>
        <end position="54"/>
    </location>
</feature>
<feature type="transmembrane region" description="Helical; Name=2" evidence="1">
    <location>
        <begin position="55"/>
        <end position="75"/>
    </location>
</feature>
<feature type="topological domain" description="Extracellular" evidence="1">
    <location>
        <begin position="76"/>
        <end position="99"/>
    </location>
</feature>
<feature type="transmembrane region" description="Helical; Name=3" evidence="1">
    <location>
        <begin position="100"/>
        <end position="120"/>
    </location>
</feature>
<feature type="topological domain" description="Cytoplasmic" evidence="1">
    <location>
        <begin position="121"/>
        <end position="139"/>
    </location>
</feature>
<feature type="transmembrane region" description="Helical; Name=4" evidence="1">
    <location>
        <begin position="140"/>
        <end position="160"/>
    </location>
</feature>
<feature type="topological domain" description="Extracellular" evidence="1">
    <location>
        <begin position="161"/>
        <end position="197"/>
    </location>
</feature>
<feature type="transmembrane region" description="Helical; Name=5" evidence="1">
    <location>
        <begin position="198"/>
        <end position="217"/>
    </location>
</feature>
<feature type="topological domain" description="Cytoplasmic" evidence="1">
    <location>
        <begin position="218"/>
        <end position="237"/>
    </location>
</feature>
<feature type="transmembrane region" description="Helical; Name=6" evidence="1">
    <location>
        <begin position="238"/>
        <end position="258"/>
    </location>
</feature>
<feature type="topological domain" description="Extracellular" evidence="1">
    <location>
        <begin position="259"/>
        <end position="271"/>
    </location>
</feature>
<feature type="transmembrane region" description="Helical; Name=7" evidence="1">
    <location>
        <begin position="272"/>
        <end position="292"/>
    </location>
</feature>
<feature type="topological domain" description="Cytoplasmic" evidence="1">
    <location>
        <begin position="293"/>
        <end position="312"/>
    </location>
</feature>
<feature type="glycosylation site" description="N-linked (GlcNAc...) asparagine" evidence="1">
    <location>
        <position position="5"/>
    </location>
</feature>
<feature type="disulfide bond" evidence="2">
    <location>
        <begin position="97"/>
        <end position="189"/>
    </location>
</feature>
<feature type="sequence variant" id="VAR_024106" description="In dbSNP:rs1864346.">
    <original>A</original>
    <variation>T</variation>
    <location>
        <position position="10"/>
    </location>
</feature>
<feature type="sequence variant" id="VAR_024107" description="In dbSNP:rs857827." evidence="3">
    <original>I</original>
    <variation>T</variation>
    <location>
        <position position="194"/>
    </location>
</feature>
<feature type="sequence variant" id="VAR_053223" description="In dbSNP:rs857826." evidence="3 4 5">
    <original>F</original>
    <variation>L</variation>
    <location>
        <position position="245"/>
    </location>
</feature>
<feature type="sequence variant" id="VAR_024108" description="In dbSNP:rs857825." evidence="3 4 5">
    <original>Q</original>
    <variation>R</variation>
    <location>
        <position position="261"/>
    </location>
</feature>
<feature type="sequence variant" id="VAR_024109" description="In dbSNP:rs857824.">
    <original>R</original>
    <variation>H</variation>
    <location>
        <position position="293"/>
    </location>
</feature>
<feature type="sequence conflict" description="In Ref. 5; AAK95093." evidence="6" ref="5">
    <original>L</original>
    <variation>F</variation>
    <location>
        <position position="86"/>
    </location>
</feature>
<comment type="function">
    <text evidence="6">Odorant receptor.</text>
</comment>
<comment type="subcellular location">
    <subcellularLocation>
        <location>Cell membrane</location>
        <topology>Multi-pass membrane protein</topology>
    </subcellularLocation>
</comment>
<comment type="similarity">
    <text evidence="2">Belongs to the G-protein coupled receptor 1 family.</text>
</comment>
<comment type="online information" name="Human Olfactory Receptor Data Exploratorium (HORDE)">
    <link uri="http://genome.weizmann.ac.il/horde/card/index/symbol:OR6N1"/>
</comment>
<accession>Q8NGY5</accession>
<accession>B2RUT4</accession>
<accession>Q5VUU8</accession>
<accession>Q96R35</accession>
<evidence type="ECO:0000255" key="1"/>
<evidence type="ECO:0000255" key="2">
    <source>
        <dbReference type="PROSITE-ProRule" id="PRU00521"/>
    </source>
</evidence>
<evidence type="ECO:0000269" key="3">
    <source>
    </source>
</evidence>
<evidence type="ECO:0000269" key="4">
    <source>
    </source>
</evidence>
<evidence type="ECO:0000269" key="5">
    <source>
    </source>
</evidence>
<evidence type="ECO:0000305" key="6"/>
<sequence length="312" mass="34869">MDTGNWSQVAEFIILGFPHLQGVQIYLFLLLLLIYLMTVLGNLLIFLVVCLDSRLHTPMYHFVSILSFSELGYTAATIPKMLANLLSEKKTISFSGCLLQIYFFHSLGATECYLLTAMAYDRYLAICRPLHYPTLMTPTLCAEIAIGCWLGGLAGPVVEISLISRLPFCGPNRIQHVFCDFPPVLSLACTDTSINVLVDFVINSCKILATFLLILCSYVQIICTVLRIPSAAGKRKAISTCASHFTVVLIFYGSILSMYVQLKKSYSLDYDQALAVVYSVLTPFLNPFIYSLRNKEIKEAVRRQLKRIGILA</sequence>
<dbReference type="EMBL" id="AB065631">
    <property type="protein sequence ID" value="BAC05857.1"/>
    <property type="molecule type" value="Genomic_DNA"/>
</dbReference>
<dbReference type="EMBL" id="KP290131">
    <property type="protein sequence ID" value="ALI87321.1"/>
    <property type="molecule type" value="Genomic_DNA"/>
</dbReference>
<dbReference type="EMBL" id="AL513205">
    <property type="status" value="NOT_ANNOTATED_CDS"/>
    <property type="molecule type" value="Genomic_DNA"/>
</dbReference>
<dbReference type="EMBL" id="BC146847">
    <property type="protein sequence ID" value="AAI46848.1"/>
    <property type="molecule type" value="mRNA"/>
</dbReference>
<dbReference type="EMBL" id="AF399608">
    <property type="protein sequence ID" value="AAK95093.1"/>
    <property type="molecule type" value="Genomic_DNA"/>
</dbReference>
<dbReference type="CCDS" id="CCDS30905.1"/>
<dbReference type="RefSeq" id="NP_001005185.1">
    <property type="nucleotide sequence ID" value="NM_001005185.2"/>
</dbReference>
<dbReference type="RefSeq" id="XP_016855814.1">
    <property type="nucleotide sequence ID" value="XM_017000325.2"/>
</dbReference>
<dbReference type="RefSeq" id="XP_016855815.1">
    <property type="nucleotide sequence ID" value="XM_017000326.2"/>
</dbReference>
<dbReference type="RefSeq" id="XP_016855816.1">
    <property type="nucleotide sequence ID" value="XM_017000327.2"/>
</dbReference>
<dbReference type="RefSeq" id="XP_054190433.1">
    <property type="nucleotide sequence ID" value="XM_054334458.1"/>
</dbReference>
<dbReference type="RefSeq" id="XP_054190434.1">
    <property type="nucleotide sequence ID" value="XM_054334459.1"/>
</dbReference>
<dbReference type="RefSeq" id="XP_054190435.1">
    <property type="nucleotide sequence ID" value="XM_054334460.1"/>
</dbReference>
<dbReference type="SMR" id="Q8NGY5"/>
<dbReference type="BioGRID" id="126117">
    <property type="interactions" value="8"/>
</dbReference>
<dbReference type="FunCoup" id="Q8NGY5">
    <property type="interactions" value="462"/>
</dbReference>
<dbReference type="IntAct" id="Q8NGY5">
    <property type="interactions" value="1"/>
</dbReference>
<dbReference type="STRING" id="9606.ENSP00000493254"/>
<dbReference type="GlyCosmos" id="Q8NGY5">
    <property type="glycosylation" value="1 site, No reported glycans"/>
</dbReference>
<dbReference type="GlyGen" id="Q8NGY5">
    <property type="glycosylation" value="1 site"/>
</dbReference>
<dbReference type="iPTMnet" id="Q8NGY5"/>
<dbReference type="PhosphoSitePlus" id="Q8NGY5"/>
<dbReference type="BioMuta" id="OR6N1"/>
<dbReference type="DMDM" id="38372788"/>
<dbReference type="MassIVE" id="Q8NGY5"/>
<dbReference type="PaxDb" id="9606-ENSP00000335535"/>
<dbReference type="Antibodypedia" id="34252">
    <property type="antibodies" value="71 antibodies from 22 providers"/>
</dbReference>
<dbReference type="DNASU" id="128372"/>
<dbReference type="Ensembl" id="ENST00000641846.1">
    <property type="protein sequence ID" value="ENSP00000493254.1"/>
    <property type="gene ID" value="ENSG00000197403.5"/>
</dbReference>
<dbReference type="GeneID" id="128372"/>
<dbReference type="KEGG" id="hsa:128372"/>
<dbReference type="MANE-Select" id="ENST00000641846.1">
    <property type="protein sequence ID" value="ENSP00000493254.1"/>
    <property type="RefSeq nucleotide sequence ID" value="NM_001005185.2"/>
    <property type="RefSeq protein sequence ID" value="NP_001005185.1"/>
</dbReference>
<dbReference type="UCSC" id="uc010piq.2">
    <property type="organism name" value="human"/>
</dbReference>
<dbReference type="AGR" id="HGNC:15034"/>
<dbReference type="CTD" id="128372"/>
<dbReference type="DisGeNET" id="128372"/>
<dbReference type="GeneCards" id="OR6N1"/>
<dbReference type="HGNC" id="HGNC:15034">
    <property type="gene designation" value="OR6N1"/>
</dbReference>
<dbReference type="HPA" id="ENSG00000197403">
    <property type="expression patterns" value="Not detected"/>
</dbReference>
<dbReference type="neXtProt" id="NX_Q8NGY5"/>
<dbReference type="OpenTargets" id="ENSG00000197403"/>
<dbReference type="PharmGKB" id="PA32599"/>
<dbReference type="VEuPathDB" id="HostDB:ENSG00000197403"/>
<dbReference type="eggNOG" id="ENOG502QVH7">
    <property type="taxonomic scope" value="Eukaryota"/>
</dbReference>
<dbReference type="GeneTree" id="ENSGT00940000158895"/>
<dbReference type="HOGENOM" id="CLU_012526_5_5_1"/>
<dbReference type="InParanoid" id="Q8NGY5"/>
<dbReference type="OMA" id="HTPMYQF"/>
<dbReference type="OrthoDB" id="9975554at2759"/>
<dbReference type="PAN-GO" id="Q8NGY5">
    <property type="GO annotations" value="0 GO annotations based on evolutionary models"/>
</dbReference>
<dbReference type="PhylomeDB" id="Q8NGY5"/>
<dbReference type="TreeFam" id="TF337673"/>
<dbReference type="PathwayCommons" id="Q8NGY5"/>
<dbReference type="Reactome" id="R-HSA-9752946">
    <property type="pathway name" value="Expression and translocation of olfactory receptors"/>
</dbReference>
<dbReference type="BioGRID-ORCS" id="128372">
    <property type="hits" value="4 hits in 742 CRISPR screens"/>
</dbReference>
<dbReference type="ChiTaRS" id="OR6N1">
    <property type="organism name" value="human"/>
</dbReference>
<dbReference type="GeneWiki" id="OR6N1"/>
<dbReference type="GenomeRNAi" id="128372"/>
<dbReference type="Pharos" id="Q8NGY5">
    <property type="development level" value="Tdark"/>
</dbReference>
<dbReference type="PRO" id="PR:Q8NGY5"/>
<dbReference type="Proteomes" id="UP000005640">
    <property type="component" value="Chromosome 1"/>
</dbReference>
<dbReference type="RNAct" id="Q8NGY5">
    <property type="molecule type" value="protein"/>
</dbReference>
<dbReference type="Bgee" id="ENSG00000197403">
    <property type="expression patterns" value="Expressed in bone marrow and 34 other cell types or tissues"/>
</dbReference>
<dbReference type="GO" id="GO:0005886">
    <property type="term" value="C:plasma membrane"/>
    <property type="evidence" value="ECO:0000318"/>
    <property type="project" value="GO_Central"/>
</dbReference>
<dbReference type="GO" id="GO:0004930">
    <property type="term" value="F:G protein-coupled receptor activity"/>
    <property type="evidence" value="ECO:0007669"/>
    <property type="project" value="UniProtKB-KW"/>
</dbReference>
<dbReference type="GO" id="GO:0004984">
    <property type="term" value="F:olfactory receptor activity"/>
    <property type="evidence" value="ECO:0000318"/>
    <property type="project" value="GO_Central"/>
</dbReference>
<dbReference type="GO" id="GO:0050911">
    <property type="term" value="P:detection of chemical stimulus involved in sensory perception of smell"/>
    <property type="evidence" value="ECO:0000318"/>
    <property type="project" value="GO_Central"/>
</dbReference>
<dbReference type="CDD" id="cd15914">
    <property type="entry name" value="7tmA_OR6N-like"/>
    <property type="match status" value="1"/>
</dbReference>
<dbReference type="FunFam" id="1.10.1220.70:FF:000001">
    <property type="entry name" value="Olfactory receptor"/>
    <property type="match status" value="1"/>
</dbReference>
<dbReference type="FunFam" id="1.20.1070.10:FF:000001">
    <property type="entry name" value="Olfactory receptor"/>
    <property type="match status" value="1"/>
</dbReference>
<dbReference type="Gene3D" id="1.20.1070.10">
    <property type="entry name" value="Rhodopsin 7-helix transmembrane proteins"/>
    <property type="match status" value="1"/>
</dbReference>
<dbReference type="InterPro" id="IPR000276">
    <property type="entry name" value="GPCR_Rhodpsn"/>
</dbReference>
<dbReference type="InterPro" id="IPR017452">
    <property type="entry name" value="GPCR_Rhodpsn_7TM"/>
</dbReference>
<dbReference type="InterPro" id="IPR000725">
    <property type="entry name" value="Olfact_rcpt"/>
</dbReference>
<dbReference type="InterPro" id="IPR050939">
    <property type="entry name" value="Olfactory_GPCR1"/>
</dbReference>
<dbReference type="PANTHER" id="PTHR24242">
    <property type="entry name" value="G-PROTEIN COUPLED RECEPTOR"/>
    <property type="match status" value="1"/>
</dbReference>
<dbReference type="PANTHER" id="PTHR24242:SF369">
    <property type="entry name" value="OLFACTORY RECEPTOR"/>
    <property type="match status" value="1"/>
</dbReference>
<dbReference type="Pfam" id="PF13853">
    <property type="entry name" value="7tm_4"/>
    <property type="match status" value="1"/>
</dbReference>
<dbReference type="PRINTS" id="PR00237">
    <property type="entry name" value="GPCRRHODOPSN"/>
</dbReference>
<dbReference type="PRINTS" id="PR00245">
    <property type="entry name" value="OLFACTORYR"/>
</dbReference>
<dbReference type="SUPFAM" id="SSF81321">
    <property type="entry name" value="Family A G protein-coupled receptor-like"/>
    <property type="match status" value="1"/>
</dbReference>
<dbReference type="PROSITE" id="PS00237">
    <property type="entry name" value="G_PROTEIN_RECEP_F1_1"/>
    <property type="match status" value="1"/>
</dbReference>
<dbReference type="PROSITE" id="PS50262">
    <property type="entry name" value="G_PROTEIN_RECEP_F1_2"/>
    <property type="match status" value="1"/>
</dbReference>
<proteinExistence type="evidence at transcript level"/>
<protein>
    <recommendedName>
        <fullName>Olfactory receptor 6N1</fullName>
    </recommendedName>
</protein>
<keyword id="KW-1003">Cell membrane</keyword>
<keyword id="KW-1015">Disulfide bond</keyword>
<keyword id="KW-0297">G-protein coupled receptor</keyword>
<keyword id="KW-0325">Glycoprotein</keyword>
<keyword id="KW-0472">Membrane</keyword>
<keyword id="KW-0552">Olfaction</keyword>
<keyword id="KW-0675">Receptor</keyword>
<keyword id="KW-1185">Reference proteome</keyword>
<keyword id="KW-0716">Sensory transduction</keyword>
<keyword id="KW-0807">Transducer</keyword>
<keyword id="KW-0812">Transmembrane</keyword>
<keyword id="KW-1133">Transmembrane helix</keyword>
<gene>
    <name type="primary">OR6N1</name>
</gene>
<reference key="1">
    <citation type="submission" date="2001-07" db="EMBL/GenBank/DDBJ databases">
        <title>Genome-wide discovery and analysis of human seven transmembrane helix receptor genes.</title>
        <authorList>
            <person name="Suwa M."/>
            <person name="Sato T."/>
            <person name="Okouchi I."/>
            <person name="Arita M."/>
            <person name="Futami K."/>
            <person name="Matsumoto S."/>
            <person name="Tsutsumi S."/>
            <person name="Aburatani H."/>
            <person name="Asai K."/>
            <person name="Akiyama Y."/>
        </authorList>
    </citation>
    <scope>NUCLEOTIDE SEQUENCE [GENOMIC DNA]</scope>
</reference>
<reference key="2">
    <citation type="journal article" date="2015" name="Sci. Data">
        <title>Human olfactory receptor responses to odorants.</title>
        <authorList>
            <person name="Mainland J.D."/>
            <person name="Li Y.R."/>
            <person name="Zhou T."/>
            <person name="Liu W.L."/>
            <person name="Matsunami H."/>
        </authorList>
    </citation>
    <scope>NUCLEOTIDE SEQUENCE [GENOMIC DNA]</scope>
    <scope>VARIANTS LEU-245 AND ARG-261</scope>
</reference>
<reference key="3">
    <citation type="journal article" date="2006" name="Nature">
        <title>The DNA sequence and biological annotation of human chromosome 1.</title>
        <authorList>
            <person name="Gregory S.G."/>
            <person name="Barlow K.F."/>
            <person name="McLay K.E."/>
            <person name="Kaul R."/>
            <person name="Swarbreck D."/>
            <person name="Dunham A."/>
            <person name="Scott C.E."/>
            <person name="Howe K.L."/>
            <person name="Woodfine K."/>
            <person name="Spencer C.C.A."/>
            <person name="Jones M.C."/>
            <person name="Gillson C."/>
            <person name="Searle S."/>
            <person name="Zhou Y."/>
            <person name="Kokocinski F."/>
            <person name="McDonald L."/>
            <person name="Evans R."/>
            <person name="Phillips K."/>
            <person name="Atkinson A."/>
            <person name="Cooper R."/>
            <person name="Jones C."/>
            <person name="Hall R.E."/>
            <person name="Andrews T.D."/>
            <person name="Lloyd C."/>
            <person name="Ainscough R."/>
            <person name="Almeida J.P."/>
            <person name="Ambrose K.D."/>
            <person name="Anderson F."/>
            <person name="Andrew R.W."/>
            <person name="Ashwell R.I.S."/>
            <person name="Aubin K."/>
            <person name="Babbage A.K."/>
            <person name="Bagguley C.L."/>
            <person name="Bailey J."/>
            <person name="Beasley H."/>
            <person name="Bethel G."/>
            <person name="Bird C.P."/>
            <person name="Bray-Allen S."/>
            <person name="Brown J.Y."/>
            <person name="Brown A.J."/>
            <person name="Buckley D."/>
            <person name="Burton J."/>
            <person name="Bye J."/>
            <person name="Carder C."/>
            <person name="Chapman J.C."/>
            <person name="Clark S.Y."/>
            <person name="Clarke G."/>
            <person name="Clee C."/>
            <person name="Cobley V."/>
            <person name="Collier R.E."/>
            <person name="Corby N."/>
            <person name="Coville G.J."/>
            <person name="Davies J."/>
            <person name="Deadman R."/>
            <person name="Dunn M."/>
            <person name="Earthrowl M."/>
            <person name="Ellington A.G."/>
            <person name="Errington H."/>
            <person name="Frankish A."/>
            <person name="Frankland J."/>
            <person name="French L."/>
            <person name="Garner P."/>
            <person name="Garnett J."/>
            <person name="Gay L."/>
            <person name="Ghori M.R.J."/>
            <person name="Gibson R."/>
            <person name="Gilby L.M."/>
            <person name="Gillett W."/>
            <person name="Glithero R.J."/>
            <person name="Grafham D.V."/>
            <person name="Griffiths C."/>
            <person name="Griffiths-Jones S."/>
            <person name="Grocock R."/>
            <person name="Hammond S."/>
            <person name="Harrison E.S.I."/>
            <person name="Hart E."/>
            <person name="Haugen E."/>
            <person name="Heath P.D."/>
            <person name="Holmes S."/>
            <person name="Holt K."/>
            <person name="Howden P.J."/>
            <person name="Hunt A.R."/>
            <person name="Hunt S.E."/>
            <person name="Hunter G."/>
            <person name="Isherwood J."/>
            <person name="James R."/>
            <person name="Johnson C."/>
            <person name="Johnson D."/>
            <person name="Joy A."/>
            <person name="Kay M."/>
            <person name="Kershaw J.K."/>
            <person name="Kibukawa M."/>
            <person name="Kimberley A.M."/>
            <person name="King A."/>
            <person name="Knights A.J."/>
            <person name="Lad H."/>
            <person name="Laird G."/>
            <person name="Lawlor S."/>
            <person name="Leongamornlert D.A."/>
            <person name="Lloyd D.M."/>
            <person name="Loveland J."/>
            <person name="Lovell J."/>
            <person name="Lush M.J."/>
            <person name="Lyne R."/>
            <person name="Martin S."/>
            <person name="Mashreghi-Mohammadi M."/>
            <person name="Matthews L."/>
            <person name="Matthews N.S.W."/>
            <person name="McLaren S."/>
            <person name="Milne S."/>
            <person name="Mistry S."/>
            <person name="Moore M.J.F."/>
            <person name="Nickerson T."/>
            <person name="O'Dell C.N."/>
            <person name="Oliver K."/>
            <person name="Palmeiri A."/>
            <person name="Palmer S.A."/>
            <person name="Parker A."/>
            <person name="Patel D."/>
            <person name="Pearce A.V."/>
            <person name="Peck A.I."/>
            <person name="Pelan S."/>
            <person name="Phelps K."/>
            <person name="Phillimore B.J."/>
            <person name="Plumb R."/>
            <person name="Rajan J."/>
            <person name="Raymond C."/>
            <person name="Rouse G."/>
            <person name="Saenphimmachak C."/>
            <person name="Sehra H.K."/>
            <person name="Sheridan E."/>
            <person name="Shownkeen R."/>
            <person name="Sims S."/>
            <person name="Skuce C.D."/>
            <person name="Smith M."/>
            <person name="Steward C."/>
            <person name="Subramanian S."/>
            <person name="Sycamore N."/>
            <person name="Tracey A."/>
            <person name="Tromans A."/>
            <person name="Van Helmond Z."/>
            <person name="Wall M."/>
            <person name="Wallis J.M."/>
            <person name="White S."/>
            <person name="Whitehead S.L."/>
            <person name="Wilkinson J.E."/>
            <person name="Willey D.L."/>
            <person name="Williams H."/>
            <person name="Wilming L."/>
            <person name="Wray P.W."/>
            <person name="Wu Z."/>
            <person name="Coulson A."/>
            <person name="Vaudin M."/>
            <person name="Sulston J.E."/>
            <person name="Durbin R.M."/>
            <person name="Hubbard T."/>
            <person name="Wooster R."/>
            <person name="Dunham I."/>
            <person name="Carter N.P."/>
            <person name="McVean G."/>
            <person name="Ross M.T."/>
            <person name="Harrow J."/>
            <person name="Olson M.V."/>
            <person name="Beck S."/>
            <person name="Rogers J."/>
            <person name="Bentley D.R."/>
        </authorList>
    </citation>
    <scope>NUCLEOTIDE SEQUENCE [LARGE SCALE GENOMIC DNA]</scope>
</reference>
<reference key="4">
    <citation type="journal article" date="2004" name="Genome Res.">
        <title>The status, quality, and expansion of the NIH full-length cDNA project: the Mammalian Gene Collection (MGC).</title>
        <authorList>
            <consortium name="The MGC Project Team"/>
        </authorList>
    </citation>
    <scope>NUCLEOTIDE SEQUENCE [LARGE SCALE MRNA]</scope>
    <scope>VARIANTS LEU-245 AND ARG-261</scope>
</reference>
<reference key="5">
    <citation type="journal article" date="2002" name="Genomics">
        <title>DEFOG: a practical scheme for deciphering families of genes.</title>
        <authorList>
            <person name="Fuchs T."/>
            <person name="Malecova B."/>
            <person name="Linhart C."/>
            <person name="Sharan R."/>
            <person name="Khen M."/>
            <person name="Herwig R."/>
            <person name="Shmulevich D."/>
            <person name="Elkon R."/>
            <person name="Steinfath M."/>
            <person name="O'Brien J.K."/>
            <person name="Radelof U."/>
            <person name="Lehrach H."/>
            <person name="Lancet D."/>
            <person name="Shamir R."/>
        </authorList>
    </citation>
    <scope>NUCLEOTIDE SEQUENCE [GENOMIC DNA] OF 68-283</scope>
    <scope>VARIANTS THR-194; LEU-245 AND ARG-261</scope>
</reference>
<name>OR6N1_HUMAN</name>
<organism>
    <name type="scientific">Homo sapiens</name>
    <name type="common">Human</name>
    <dbReference type="NCBI Taxonomy" id="9606"/>
    <lineage>
        <taxon>Eukaryota</taxon>
        <taxon>Metazoa</taxon>
        <taxon>Chordata</taxon>
        <taxon>Craniata</taxon>
        <taxon>Vertebrata</taxon>
        <taxon>Euteleostomi</taxon>
        <taxon>Mammalia</taxon>
        <taxon>Eutheria</taxon>
        <taxon>Euarchontoglires</taxon>
        <taxon>Primates</taxon>
        <taxon>Haplorrhini</taxon>
        <taxon>Catarrhini</taxon>
        <taxon>Hominidae</taxon>
        <taxon>Homo</taxon>
    </lineage>
</organism>